<dbReference type="EMBL" id="CP001213">
    <property type="protein sequence ID" value="ACL28307.1"/>
    <property type="molecule type" value="Genomic_DNA"/>
</dbReference>
<dbReference type="RefSeq" id="WP_004219016.1">
    <property type="nucleotide sequence ID" value="NC_011835.1"/>
</dbReference>
<dbReference type="SMR" id="B8DV06"/>
<dbReference type="STRING" id="442563.BLA_0001"/>
<dbReference type="GeneID" id="29695103"/>
<dbReference type="KEGG" id="bla:BLA_0001"/>
<dbReference type="PATRIC" id="fig|442563.4.peg.1"/>
<dbReference type="HOGENOM" id="CLU_026910_2_2_11"/>
<dbReference type="Proteomes" id="UP000002456">
    <property type="component" value="Chromosome"/>
</dbReference>
<dbReference type="GO" id="GO:0005737">
    <property type="term" value="C:cytoplasm"/>
    <property type="evidence" value="ECO:0007669"/>
    <property type="project" value="UniProtKB-SubCell"/>
</dbReference>
<dbReference type="GO" id="GO:0005886">
    <property type="term" value="C:plasma membrane"/>
    <property type="evidence" value="ECO:0007669"/>
    <property type="project" value="TreeGrafter"/>
</dbReference>
<dbReference type="GO" id="GO:0005524">
    <property type="term" value="F:ATP binding"/>
    <property type="evidence" value="ECO:0007669"/>
    <property type="project" value="UniProtKB-UniRule"/>
</dbReference>
<dbReference type="GO" id="GO:0016887">
    <property type="term" value="F:ATP hydrolysis activity"/>
    <property type="evidence" value="ECO:0007669"/>
    <property type="project" value="InterPro"/>
</dbReference>
<dbReference type="GO" id="GO:0003688">
    <property type="term" value="F:DNA replication origin binding"/>
    <property type="evidence" value="ECO:0007669"/>
    <property type="project" value="UniProtKB-UniRule"/>
</dbReference>
<dbReference type="GO" id="GO:0008289">
    <property type="term" value="F:lipid binding"/>
    <property type="evidence" value="ECO:0007669"/>
    <property type="project" value="UniProtKB-KW"/>
</dbReference>
<dbReference type="GO" id="GO:0006270">
    <property type="term" value="P:DNA replication initiation"/>
    <property type="evidence" value="ECO:0007669"/>
    <property type="project" value="UniProtKB-UniRule"/>
</dbReference>
<dbReference type="GO" id="GO:0006275">
    <property type="term" value="P:regulation of DNA replication"/>
    <property type="evidence" value="ECO:0007669"/>
    <property type="project" value="UniProtKB-UniRule"/>
</dbReference>
<dbReference type="CDD" id="cd00009">
    <property type="entry name" value="AAA"/>
    <property type="match status" value="1"/>
</dbReference>
<dbReference type="CDD" id="cd06571">
    <property type="entry name" value="Bac_DnaA_C"/>
    <property type="match status" value="1"/>
</dbReference>
<dbReference type="FunFam" id="1.10.8.60:FF:000003">
    <property type="entry name" value="Chromosomal replication initiator protein DnaA"/>
    <property type="match status" value="1"/>
</dbReference>
<dbReference type="FunFam" id="3.40.50.300:FF:000668">
    <property type="entry name" value="Chromosomal replication initiator protein DnaA"/>
    <property type="match status" value="1"/>
</dbReference>
<dbReference type="Gene3D" id="1.10.1750.10">
    <property type="match status" value="1"/>
</dbReference>
<dbReference type="Gene3D" id="1.10.8.60">
    <property type="match status" value="1"/>
</dbReference>
<dbReference type="Gene3D" id="3.40.50.300">
    <property type="entry name" value="P-loop containing nucleotide triphosphate hydrolases"/>
    <property type="match status" value="1"/>
</dbReference>
<dbReference type="HAMAP" id="MF_00377">
    <property type="entry name" value="DnaA_bact"/>
    <property type="match status" value="1"/>
</dbReference>
<dbReference type="InterPro" id="IPR003593">
    <property type="entry name" value="AAA+_ATPase"/>
</dbReference>
<dbReference type="InterPro" id="IPR001957">
    <property type="entry name" value="Chromosome_initiator_DnaA"/>
</dbReference>
<dbReference type="InterPro" id="IPR020591">
    <property type="entry name" value="Chromosome_initiator_DnaA-like"/>
</dbReference>
<dbReference type="InterPro" id="IPR018312">
    <property type="entry name" value="Chromosome_initiator_DnaA_CS"/>
</dbReference>
<dbReference type="InterPro" id="IPR013159">
    <property type="entry name" value="DnaA_C"/>
</dbReference>
<dbReference type="InterPro" id="IPR013317">
    <property type="entry name" value="DnaA_dom"/>
</dbReference>
<dbReference type="InterPro" id="IPR027417">
    <property type="entry name" value="P-loop_NTPase"/>
</dbReference>
<dbReference type="InterPro" id="IPR010921">
    <property type="entry name" value="Trp_repressor/repl_initiator"/>
</dbReference>
<dbReference type="NCBIfam" id="TIGR00362">
    <property type="entry name" value="DnaA"/>
    <property type="match status" value="1"/>
</dbReference>
<dbReference type="PANTHER" id="PTHR30050">
    <property type="entry name" value="CHROMOSOMAL REPLICATION INITIATOR PROTEIN DNAA"/>
    <property type="match status" value="1"/>
</dbReference>
<dbReference type="PANTHER" id="PTHR30050:SF2">
    <property type="entry name" value="CHROMOSOMAL REPLICATION INITIATOR PROTEIN DNAA"/>
    <property type="match status" value="1"/>
</dbReference>
<dbReference type="Pfam" id="PF00308">
    <property type="entry name" value="Bac_DnaA"/>
    <property type="match status" value="1"/>
</dbReference>
<dbReference type="Pfam" id="PF08299">
    <property type="entry name" value="Bac_DnaA_C"/>
    <property type="match status" value="1"/>
</dbReference>
<dbReference type="PRINTS" id="PR00051">
    <property type="entry name" value="DNAA"/>
</dbReference>
<dbReference type="SMART" id="SM00382">
    <property type="entry name" value="AAA"/>
    <property type="match status" value="1"/>
</dbReference>
<dbReference type="SMART" id="SM00760">
    <property type="entry name" value="Bac_DnaA_C"/>
    <property type="match status" value="1"/>
</dbReference>
<dbReference type="SUPFAM" id="SSF52540">
    <property type="entry name" value="P-loop containing nucleoside triphosphate hydrolases"/>
    <property type="match status" value="1"/>
</dbReference>
<dbReference type="SUPFAM" id="SSF48295">
    <property type="entry name" value="TrpR-like"/>
    <property type="match status" value="1"/>
</dbReference>
<dbReference type="PROSITE" id="PS01008">
    <property type="entry name" value="DNAA"/>
    <property type="match status" value="1"/>
</dbReference>
<keyword id="KW-0067">ATP-binding</keyword>
<keyword id="KW-0963">Cytoplasm</keyword>
<keyword id="KW-0235">DNA replication</keyword>
<keyword id="KW-0238">DNA-binding</keyword>
<keyword id="KW-0446">Lipid-binding</keyword>
<keyword id="KW-0547">Nucleotide-binding</keyword>
<keyword id="KW-1185">Reference proteome</keyword>
<proteinExistence type="inferred from homology"/>
<organism>
    <name type="scientific">Bifidobacterium animalis subsp. lactis (strain AD011)</name>
    <dbReference type="NCBI Taxonomy" id="442563"/>
    <lineage>
        <taxon>Bacteria</taxon>
        <taxon>Bacillati</taxon>
        <taxon>Actinomycetota</taxon>
        <taxon>Actinomycetes</taxon>
        <taxon>Bifidobacteriales</taxon>
        <taxon>Bifidobacteriaceae</taxon>
        <taxon>Bifidobacterium</taxon>
    </lineage>
</organism>
<feature type="chain" id="PRO_1000189782" description="Chromosomal replication initiator protein DnaA">
    <location>
        <begin position="1"/>
        <end position="583"/>
    </location>
</feature>
<feature type="region of interest" description="Domain I, interacts with DnaA modulators" evidence="1">
    <location>
        <begin position="1"/>
        <end position="91"/>
    </location>
</feature>
<feature type="region of interest" description="Disordered" evidence="2">
    <location>
        <begin position="86"/>
        <end position="179"/>
    </location>
</feature>
<feature type="region of interest" description="Domain II" evidence="1">
    <location>
        <begin position="91"/>
        <end position="235"/>
    </location>
</feature>
<feature type="region of interest" description="Disordered" evidence="2">
    <location>
        <begin position="197"/>
        <end position="232"/>
    </location>
</feature>
<feature type="region of interest" description="Domain III, AAA+ region" evidence="1">
    <location>
        <begin position="236"/>
        <end position="460"/>
    </location>
</feature>
<feature type="region of interest" description="Domain IV, binds dsDNA" evidence="1">
    <location>
        <begin position="461"/>
        <end position="583"/>
    </location>
</feature>
<feature type="compositionally biased region" description="Polar residues" evidence="2">
    <location>
        <begin position="97"/>
        <end position="106"/>
    </location>
</feature>
<feature type="compositionally biased region" description="Basic and acidic residues" evidence="2">
    <location>
        <begin position="126"/>
        <end position="135"/>
    </location>
</feature>
<feature type="compositionally biased region" description="Basic and acidic residues" evidence="2">
    <location>
        <begin position="147"/>
        <end position="174"/>
    </location>
</feature>
<feature type="compositionally biased region" description="Polar residues" evidence="2">
    <location>
        <begin position="205"/>
        <end position="226"/>
    </location>
</feature>
<feature type="binding site" evidence="1">
    <location>
        <position position="280"/>
    </location>
    <ligand>
        <name>ATP</name>
        <dbReference type="ChEBI" id="CHEBI:30616"/>
    </ligand>
</feature>
<feature type="binding site" evidence="1">
    <location>
        <position position="282"/>
    </location>
    <ligand>
        <name>ATP</name>
        <dbReference type="ChEBI" id="CHEBI:30616"/>
    </ligand>
</feature>
<feature type="binding site" evidence="1">
    <location>
        <position position="283"/>
    </location>
    <ligand>
        <name>ATP</name>
        <dbReference type="ChEBI" id="CHEBI:30616"/>
    </ligand>
</feature>
<feature type="binding site" evidence="1">
    <location>
        <position position="284"/>
    </location>
    <ligand>
        <name>ATP</name>
        <dbReference type="ChEBI" id="CHEBI:30616"/>
    </ligand>
</feature>
<sequence length="583" mass="64801">MNAENLDPATQAQTIWSDTLALIKQNSRLTAREQGWLAGVTAEAVVGTTIILDVENAQTLQVLQTELNEPIIGALEIANGGSPMFPAFKVMPPAQPEPQTTASPEDSGSRAADAQGAAKESVQPDEDSRTPRHSAEQTGDSRPAAAQEREDSAVHMARPDEQTAESHREPEHEPAQQPVTSHYDEAIVQTFEDIDPVAGFGPSVAGTTAPQYPPQSEMQGSFTPGVTGNYRDPVTHLNSNDTFDTFIQGDSNRFARTVALAVAEGSGRDYNPLCIYGGSGLGKTHLLHAIGNYAVQNQKPRPRVLYVTSEEFTNDFIESIRTSGQDNEDPAMEKFYRKYREVDVLLIDDIQFLGGKRGILEQFFHTFNSLYQANKRIVIASDVPPHNLEDFEDRLISRFEQGITVDVKPPNLETRIAILRMLAEQNHIRVPNDVLNLIAERFANNVRELEGALKRVIAMASLNHQPVTRALTERTLQDFFTTDVEVKPTDIIARVAKYFHLTFDDIVGPGRPRSVTLARQIAMYLTRDMTSMSLMNIGQIFGGRDHTTVMHACKHIADKMQEKQEIYNYVNELTVELKQHLND</sequence>
<comment type="function">
    <text evidence="1">Plays an essential role in the initiation and regulation of chromosomal replication. ATP-DnaA binds to the origin of replication (oriC) to initiate formation of the DNA replication initiation complex once per cell cycle. Binds the DnaA box (a 9 base pair repeat at the origin) and separates the double-stranded (ds)DNA. Forms a right-handed helical filament on oriC DNA; dsDNA binds to the exterior of the filament while single-stranded (ss)DNA is stabiized in the filament's interior. The ATP-DnaA-oriC complex binds and stabilizes one strand of the AT-rich DNA unwinding element (DUE), permitting loading of DNA polymerase. After initiation quickly degrades to an ADP-DnaA complex that is not apt for DNA replication. Binds acidic phospholipids.</text>
</comment>
<comment type="subunit">
    <text evidence="1">Oligomerizes as a right-handed, spiral filament on DNA at oriC.</text>
</comment>
<comment type="subcellular location">
    <subcellularLocation>
        <location evidence="1">Cytoplasm</location>
    </subcellularLocation>
</comment>
<comment type="domain">
    <text evidence="1">Domain I is involved in oligomerization and binding regulators, domain II is flexibile and of varying length in different bacteria, domain III forms the AAA+ region, while domain IV binds dsDNA.</text>
</comment>
<comment type="similarity">
    <text evidence="1">Belongs to the DnaA family.</text>
</comment>
<reference key="1">
    <citation type="journal article" date="2009" name="J. Bacteriol.">
        <title>Genome sequence of the probiotic bacterium Bifidobacterium animalis subsp. lactis AD011.</title>
        <authorList>
            <person name="Kim J.F."/>
            <person name="Jeong H."/>
            <person name="Yu D.S."/>
            <person name="Choi S.-H."/>
            <person name="Hur C.-G."/>
            <person name="Park M.-S."/>
            <person name="Yoon S.H."/>
            <person name="Kim D.-W."/>
            <person name="Ji G.E."/>
            <person name="Park H.-S."/>
            <person name="Oh T.K."/>
        </authorList>
    </citation>
    <scope>NUCLEOTIDE SEQUENCE [LARGE SCALE GENOMIC DNA]</scope>
    <source>
        <strain>AD011</strain>
    </source>
</reference>
<protein>
    <recommendedName>
        <fullName evidence="1">Chromosomal replication initiator protein DnaA</fullName>
    </recommendedName>
</protein>
<accession>B8DV06</accession>
<evidence type="ECO:0000255" key="1">
    <source>
        <dbReference type="HAMAP-Rule" id="MF_00377"/>
    </source>
</evidence>
<evidence type="ECO:0000256" key="2">
    <source>
        <dbReference type="SAM" id="MobiDB-lite"/>
    </source>
</evidence>
<name>DNAA_BIFA0</name>
<gene>
    <name evidence="1" type="primary">dnaA</name>
    <name type="ordered locus">BLA_0001</name>
</gene>